<sequence length="227" mass="25737">MVEVKKHKFPGVYIVIDDDGSEKIATKNLVPGQRVYGERVIKWEGEEYRIWNPHRSKLGAAIMNGLKNFPIKPGKSVLYLGIASGTTASHVSDVIGWEGKIFGIEFSPRVLRELVPIVEDRKNIVPILGDATKPEEYRALVPKVDVIFEDVAQPTQAKILIDNAEVYLKKGGYGMIAVKSRSIDVTKEPEQVFREVEKELSEYFEVIERLNLEPYEKDHALFVVRKT</sequence>
<keyword id="KW-0489">Methyltransferase</keyword>
<keyword id="KW-0694">RNA-binding</keyword>
<keyword id="KW-0698">rRNA processing</keyword>
<keyword id="KW-0808">Transferase</keyword>
<keyword id="KW-0819">tRNA processing</keyword>
<organism>
    <name type="scientific">Pyrococcus abyssi (strain GE5 / Orsay)</name>
    <dbReference type="NCBI Taxonomy" id="272844"/>
    <lineage>
        <taxon>Archaea</taxon>
        <taxon>Methanobacteriati</taxon>
        <taxon>Methanobacteriota</taxon>
        <taxon>Thermococci</taxon>
        <taxon>Thermococcales</taxon>
        <taxon>Thermococcaceae</taxon>
        <taxon>Pyrococcus</taxon>
    </lineage>
</organism>
<comment type="function">
    <text evidence="1">Involved in pre-rRNA and tRNA processing. Utilizes the methyl donor S-adenosyl-L-methionine to catalyze the site-specific 2'-hydroxyl methylation of ribose moieties in rRNA and tRNA. Site specificity is provided by a guide RNA that base pairs with the substrate. Methylation occurs at a characteristic distance from the sequence involved in base pairing with the guide RNA.</text>
</comment>
<comment type="subunit">
    <text evidence="1">Interacts with nop5. Component of box C/D small ribonucleoprotein (sRNP) particles that contain rpl7ae, FlpA and nop5, plus a guide RNA.</text>
</comment>
<comment type="similarity">
    <text evidence="1">Belongs to the methyltransferase superfamily. Fibrillarin family.</text>
</comment>
<proteinExistence type="inferred from homology"/>
<dbReference type="EC" id="2.1.1.-" evidence="1"/>
<dbReference type="EMBL" id="AJ248283">
    <property type="protein sequence ID" value="CAB48983.1"/>
    <property type="molecule type" value="Genomic_DNA"/>
</dbReference>
<dbReference type="EMBL" id="HE613800">
    <property type="protein sequence ID" value="CCE69432.1"/>
    <property type="molecule type" value="Genomic_DNA"/>
</dbReference>
<dbReference type="PIR" id="H75191">
    <property type="entry name" value="H75191"/>
</dbReference>
<dbReference type="RefSeq" id="WP_010867184.1">
    <property type="nucleotide sequence ID" value="NC_000868.1"/>
</dbReference>
<dbReference type="SMR" id="Q9V2L5"/>
<dbReference type="STRING" id="272844.PAB2306"/>
<dbReference type="KEGG" id="pab:PAB2306"/>
<dbReference type="PATRIC" id="fig|272844.11.peg.67"/>
<dbReference type="eggNOG" id="arCOG00078">
    <property type="taxonomic scope" value="Archaea"/>
</dbReference>
<dbReference type="HOGENOM" id="CLU_059055_2_0_2"/>
<dbReference type="OrthoDB" id="6244at2157"/>
<dbReference type="PhylomeDB" id="Q9V2L5"/>
<dbReference type="Proteomes" id="UP000000810">
    <property type="component" value="Chromosome"/>
</dbReference>
<dbReference type="Proteomes" id="UP000009139">
    <property type="component" value="Chromosome"/>
</dbReference>
<dbReference type="GO" id="GO:1990259">
    <property type="term" value="F:histone H2AQ104 methyltransferase activity"/>
    <property type="evidence" value="ECO:0007669"/>
    <property type="project" value="TreeGrafter"/>
</dbReference>
<dbReference type="GO" id="GO:0003723">
    <property type="term" value="F:RNA binding"/>
    <property type="evidence" value="ECO:0007669"/>
    <property type="project" value="UniProtKB-UniRule"/>
</dbReference>
<dbReference type="GO" id="GO:0008649">
    <property type="term" value="F:rRNA methyltransferase activity"/>
    <property type="evidence" value="ECO:0007669"/>
    <property type="project" value="TreeGrafter"/>
</dbReference>
<dbReference type="GO" id="GO:0000494">
    <property type="term" value="P:box C/D sno(s)RNA 3'-end processing"/>
    <property type="evidence" value="ECO:0007669"/>
    <property type="project" value="TreeGrafter"/>
</dbReference>
<dbReference type="GO" id="GO:0008033">
    <property type="term" value="P:tRNA processing"/>
    <property type="evidence" value="ECO:0007669"/>
    <property type="project" value="UniProtKB-UniRule"/>
</dbReference>
<dbReference type="FunFam" id="3.30.200.20:FF:000613">
    <property type="entry name" value="Fibrillarin-like rRNA/tRNA 2'-O-methyltransferase"/>
    <property type="match status" value="1"/>
</dbReference>
<dbReference type="Gene3D" id="3.30.200.20">
    <property type="entry name" value="Phosphorylase Kinase, domain 1"/>
    <property type="match status" value="1"/>
</dbReference>
<dbReference type="Gene3D" id="3.40.50.150">
    <property type="entry name" value="Vaccinia Virus protein VP39"/>
    <property type="match status" value="1"/>
</dbReference>
<dbReference type="HAMAP" id="MF_00351">
    <property type="entry name" value="RNA_methyltransf_FlpA"/>
    <property type="match status" value="1"/>
</dbReference>
<dbReference type="InterPro" id="IPR000692">
    <property type="entry name" value="Fibrillarin"/>
</dbReference>
<dbReference type="InterPro" id="IPR020813">
    <property type="entry name" value="Fibrillarin_CS"/>
</dbReference>
<dbReference type="InterPro" id="IPR029063">
    <property type="entry name" value="SAM-dependent_MTases_sf"/>
</dbReference>
<dbReference type="NCBIfam" id="NF003276">
    <property type="entry name" value="PRK04266.1-2"/>
    <property type="match status" value="1"/>
</dbReference>
<dbReference type="NCBIfam" id="NF003277">
    <property type="entry name" value="PRK04266.1-3"/>
    <property type="match status" value="1"/>
</dbReference>
<dbReference type="PANTHER" id="PTHR10335:SF17">
    <property type="entry name" value="FIBRILLARIN"/>
    <property type="match status" value="1"/>
</dbReference>
<dbReference type="PANTHER" id="PTHR10335">
    <property type="entry name" value="RRNA 2-O-METHYLTRANSFERASE FIBRILLARIN"/>
    <property type="match status" value="1"/>
</dbReference>
<dbReference type="Pfam" id="PF01269">
    <property type="entry name" value="Fibrillarin"/>
    <property type="match status" value="1"/>
</dbReference>
<dbReference type="PIRSF" id="PIRSF006540">
    <property type="entry name" value="Nop17p"/>
    <property type="match status" value="1"/>
</dbReference>
<dbReference type="PRINTS" id="PR00052">
    <property type="entry name" value="FIBRILLARIN"/>
</dbReference>
<dbReference type="SMART" id="SM01206">
    <property type="entry name" value="Fibrillarin"/>
    <property type="match status" value="1"/>
</dbReference>
<dbReference type="SUPFAM" id="SSF53335">
    <property type="entry name" value="S-adenosyl-L-methionine-dependent methyltransferases"/>
    <property type="match status" value="1"/>
</dbReference>
<dbReference type="PROSITE" id="PS00566">
    <property type="entry name" value="FIBRILLARIN"/>
    <property type="match status" value="1"/>
</dbReference>
<accession>Q9V2L5</accession>
<accession>G8ZFP1</accession>
<evidence type="ECO:0000255" key="1">
    <source>
        <dbReference type="HAMAP-Rule" id="MF_00351"/>
    </source>
</evidence>
<reference key="1">
    <citation type="journal article" date="2003" name="Mol. Microbiol.">
        <title>An integrated analysis of the genome of the hyperthermophilic archaeon Pyrococcus abyssi.</title>
        <authorList>
            <person name="Cohen G.N."/>
            <person name="Barbe V."/>
            <person name="Flament D."/>
            <person name="Galperin M."/>
            <person name="Heilig R."/>
            <person name="Lecompte O."/>
            <person name="Poch O."/>
            <person name="Prieur D."/>
            <person name="Querellou J."/>
            <person name="Ripp R."/>
            <person name="Thierry J.-C."/>
            <person name="Van der Oost J."/>
            <person name="Weissenbach J."/>
            <person name="Zivanovic Y."/>
            <person name="Forterre P."/>
        </authorList>
    </citation>
    <scope>NUCLEOTIDE SEQUENCE [LARGE SCALE GENOMIC DNA]</scope>
    <source>
        <strain>GE5 / Orsay</strain>
    </source>
</reference>
<reference key="2">
    <citation type="journal article" date="2012" name="Curr. Microbiol.">
        <title>Re-annotation of two hyperthermophilic archaea Pyrococcus abyssi GE5 and Pyrococcus furiosus DSM 3638.</title>
        <authorList>
            <person name="Gao J."/>
            <person name="Wang J."/>
        </authorList>
    </citation>
    <scope>GENOME REANNOTATION</scope>
    <source>
        <strain>GE5 / Orsay</strain>
    </source>
</reference>
<name>FLPA_PYRAB</name>
<protein>
    <recommendedName>
        <fullName evidence="1">Fibrillarin-like rRNA/tRNA 2'-O-methyltransferase</fullName>
        <ecNumber evidence="1">2.1.1.-</ecNumber>
    </recommendedName>
</protein>
<feature type="chain" id="PRO_0000148543" description="Fibrillarin-like rRNA/tRNA 2'-O-methyltransferase">
    <location>
        <begin position="1"/>
        <end position="227"/>
    </location>
</feature>
<feature type="binding site" evidence="1">
    <location>
        <begin position="86"/>
        <end position="87"/>
    </location>
    <ligand>
        <name>S-adenosyl-L-methionine</name>
        <dbReference type="ChEBI" id="CHEBI:59789"/>
    </ligand>
</feature>
<feature type="binding site" evidence="1">
    <location>
        <begin position="105"/>
        <end position="106"/>
    </location>
    <ligand>
        <name>S-adenosyl-L-methionine</name>
        <dbReference type="ChEBI" id="CHEBI:59789"/>
    </ligand>
</feature>
<feature type="binding site" evidence="1">
    <location>
        <begin position="130"/>
        <end position="131"/>
    </location>
    <ligand>
        <name>S-adenosyl-L-methionine</name>
        <dbReference type="ChEBI" id="CHEBI:59789"/>
    </ligand>
</feature>
<feature type="binding site" evidence="1">
    <location>
        <begin position="150"/>
        <end position="153"/>
    </location>
    <ligand>
        <name>S-adenosyl-L-methionine</name>
        <dbReference type="ChEBI" id="CHEBI:59789"/>
    </ligand>
</feature>
<gene>
    <name evidence="1" type="primary">flpA</name>
    <name type="ordered locus">PYRAB00600</name>
    <name type="ORF">PAB2306</name>
</gene>